<evidence type="ECO:0000255" key="1">
    <source>
        <dbReference type="HAMAP-Rule" id="MF_01151"/>
    </source>
</evidence>
<evidence type="ECO:0000256" key="2">
    <source>
        <dbReference type="SAM" id="MobiDB-lite"/>
    </source>
</evidence>
<proteinExistence type="inferred from homology"/>
<feature type="chain" id="PRO_1000137576" description="Protein GrpE">
    <location>
        <begin position="1"/>
        <end position="191"/>
    </location>
</feature>
<feature type="region of interest" description="Disordered" evidence="2">
    <location>
        <begin position="1"/>
        <end position="44"/>
    </location>
</feature>
<feature type="compositionally biased region" description="Basic and acidic residues" evidence="2">
    <location>
        <begin position="1"/>
        <end position="19"/>
    </location>
</feature>
<gene>
    <name evidence="1" type="primary">grpE</name>
    <name type="ordered locus">HPG27_102</name>
</gene>
<accession>B5Z9P1</accession>
<reference key="1">
    <citation type="journal article" date="2009" name="J. Bacteriol.">
        <title>The complete genome sequence of Helicobacter pylori strain G27.</title>
        <authorList>
            <person name="Baltrus D.A."/>
            <person name="Amieva M.R."/>
            <person name="Covacci A."/>
            <person name="Lowe T.M."/>
            <person name="Merrell D.S."/>
            <person name="Ottemann K.M."/>
            <person name="Stein M."/>
            <person name="Salama N.R."/>
            <person name="Guillemin K."/>
        </authorList>
    </citation>
    <scope>NUCLEOTIDE SEQUENCE [LARGE SCALE GENOMIC DNA]</scope>
    <source>
        <strain>G27</strain>
    </source>
</reference>
<keyword id="KW-0143">Chaperone</keyword>
<keyword id="KW-0963">Cytoplasm</keyword>
<keyword id="KW-1185">Reference proteome</keyword>
<keyword id="KW-0346">Stress response</keyword>
<protein>
    <recommendedName>
        <fullName evidence="1">Protein GrpE</fullName>
    </recommendedName>
    <alternativeName>
        <fullName evidence="1">HSP-70 cofactor</fullName>
    </alternativeName>
</protein>
<organism>
    <name type="scientific">Helicobacter pylori (strain G27)</name>
    <dbReference type="NCBI Taxonomy" id="563041"/>
    <lineage>
        <taxon>Bacteria</taxon>
        <taxon>Pseudomonadati</taxon>
        <taxon>Campylobacterota</taxon>
        <taxon>Epsilonproteobacteria</taxon>
        <taxon>Campylobacterales</taxon>
        <taxon>Helicobacteraceae</taxon>
        <taxon>Helicobacter</taxon>
    </lineage>
</organism>
<sequence>MKDEHNQKHDHLSQKEPESYQKACACKEQQDEEMQEAGEKEGEIKEDFELKYKEMHEKYLRVHADFENVKKRLERDKSMALEYAYEKIALDLLPVIDALLGAHKSAAEENKESALTKGLELTMEKLHEVLARHGIEGIECLEEFDPNFHNAIMQVKSEEKENGKIVQVLQQGYKYKGRVLRPAMVSIAKND</sequence>
<comment type="function">
    <text evidence="1">Participates actively in the response to hyperosmotic and heat shock by preventing the aggregation of stress-denatured proteins, in association with DnaK and GrpE. It is the nucleotide exchange factor for DnaK and may function as a thermosensor. Unfolded proteins bind initially to DnaJ; upon interaction with the DnaJ-bound protein, DnaK hydrolyzes its bound ATP, resulting in the formation of a stable complex. GrpE releases ADP from DnaK; ATP binding to DnaK triggers the release of the substrate protein, thus completing the reaction cycle. Several rounds of ATP-dependent interactions between DnaJ, DnaK and GrpE are required for fully efficient folding.</text>
</comment>
<comment type="subunit">
    <text evidence="1">Homodimer.</text>
</comment>
<comment type="subcellular location">
    <subcellularLocation>
        <location evidence="1">Cytoplasm</location>
    </subcellularLocation>
</comment>
<comment type="similarity">
    <text evidence="1">Belongs to the GrpE family.</text>
</comment>
<dbReference type="EMBL" id="CP001173">
    <property type="protein sequence ID" value="ACI26871.1"/>
    <property type="molecule type" value="Genomic_DNA"/>
</dbReference>
<dbReference type="RefSeq" id="WP_000650918.1">
    <property type="nucleotide sequence ID" value="NC_011333.1"/>
</dbReference>
<dbReference type="SMR" id="B5Z9P1"/>
<dbReference type="KEGG" id="hpg:HPG27_102"/>
<dbReference type="HOGENOM" id="CLU_057217_6_3_7"/>
<dbReference type="Proteomes" id="UP000001735">
    <property type="component" value="Chromosome"/>
</dbReference>
<dbReference type="GO" id="GO:0005829">
    <property type="term" value="C:cytosol"/>
    <property type="evidence" value="ECO:0007669"/>
    <property type="project" value="TreeGrafter"/>
</dbReference>
<dbReference type="GO" id="GO:0000774">
    <property type="term" value="F:adenyl-nucleotide exchange factor activity"/>
    <property type="evidence" value="ECO:0007669"/>
    <property type="project" value="InterPro"/>
</dbReference>
<dbReference type="GO" id="GO:0042803">
    <property type="term" value="F:protein homodimerization activity"/>
    <property type="evidence" value="ECO:0007669"/>
    <property type="project" value="InterPro"/>
</dbReference>
<dbReference type="GO" id="GO:0051087">
    <property type="term" value="F:protein-folding chaperone binding"/>
    <property type="evidence" value="ECO:0007669"/>
    <property type="project" value="InterPro"/>
</dbReference>
<dbReference type="GO" id="GO:0051082">
    <property type="term" value="F:unfolded protein binding"/>
    <property type="evidence" value="ECO:0007669"/>
    <property type="project" value="TreeGrafter"/>
</dbReference>
<dbReference type="GO" id="GO:0006457">
    <property type="term" value="P:protein folding"/>
    <property type="evidence" value="ECO:0007669"/>
    <property type="project" value="InterPro"/>
</dbReference>
<dbReference type="CDD" id="cd00446">
    <property type="entry name" value="GrpE"/>
    <property type="match status" value="1"/>
</dbReference>
<dbReference type="FunFam" id="2.30.22.10:FF:000001">
    <property type="entry name" value="Protein GrpE"/>
    <property type="match status" value="1"/>
</dbReference>
<dbReference type="FunFam" id="3.90.20.20:FF:000023">
    <property type="entry name" value="Protein GrpE"/>
    <property type="match status" value="1"/>
</dbReference>
<dbReference type="Gene3D" id="3.90.20.20">
    <property type="match status" value="1"/>
</dbReference>
<dbReference type="Gene3D" id="2.30.22.10">
    <property type="entry name" value="Head domain of nucleotide exchange factor GrpE"/>
    <property type="match status" value="1"/>
</dbReference>
<dbReference type="HAMAP" id="MF_01151">
    <property type="entry name" value="GrpE"/>
    <property type="match status" value="1"/>
</dbReference>
<dbReference type="InterPro" id="IPR000740">
    <property type="entry name" value="GrpE"/>
</dbReference>
<dbReference type="InterPro" id="IPR013805">
    <property type="entry name" value="GrpE_coiled_coil"/>
</dbReference>
<dbReference type="InterPro" id="IPR009012">
    <property type="entry name" value="GrpE_head"/>
</dbReference>
<dbReference type="NCBIfam" id="NF010738">
    <property type="entry name" value="PRK14140.1"/>
    <property type="match status" value="1"/>
</dbReference>
<dbReference type="NCBIfam" id="NF010747">
    <property type="entry name" value="PRK14149.1"/>
    <property type="match status" value="1"/>
</dbReference>
<dbReference type="PANTHER" id="PTHR21237">
    <property type="entry name" value="GRPE PROTEIN"/>
    <property type="match status" value="1"/>
</dbReference>
<dbReference type="PANTHER" id="PTHR21237:SF23">
    <property type="entry name" value="GRPE PROTEIN HOMOLOG, MITOCHONDRIAL"/>
    <property type="match status" value="1"/>
</dbReference>
<dbReference type="Pfam" id="PF01025">
    <property type="entry name" value="GrpE"/>
    <property type="match status" value="1"/>
</dbReference>
<dbReference type="PRINTS" id="PR00773">
    <property type="entry name" value="GRPEPROTEIN"/>
</dbReference>
<dbReference type="SUPFAM" id="SSF58014">
    <property type="entry name" value="Coiled-coil domain of nucleotide exchange factor GrpE"/>
    <property type="match status" value="1"/>
</dbReference>
<dbReference type="SUPFAM" id="SSF51064">
    <property type="entry name" value="Head domain of nucleotide exchange factor GrpE"/>
    <property type="match status" value="1"/>
</dbReference>
<dbReference type="PROSITE" id="PS01071">
    <property type="entry name" value="GRPE"/>
    <property type="match status" value="1"/>
</dbReference>
<name>GRPE_HELPG</name>